<name>3HIDH_BOVIN</name>
<gene>
    <name type="primary">HIBADH</name>
</gene>
<proteinExistence type="evidence at transcript level"/>
<accession>Q2HJD7</accession>
<organism>
    <name type="scientific">Bos taurus</name>
    <name type="common">Bovine</name>
    <dbReference type="NCBI Taxonomy" id="9913"/>
    <lineage>
        <taxon>Eukaryota</taxon>
        <taxon>Metazoa</taxon>
        <taxon>Chordata</taxon>
        <taxon>Craniata</taxon>
        <taxon>Vertebrata</taxon>
        <taxon>Euteleostomi</taxon>
        <taxon>Mammalia</taxon>
        <taxon>Eutheria</taxon>
        <taxon>Laurasiatheria</taxon>
        <taxon>Artiodactyla</taxon>
        <taxon>Ruminantia</taxon>
        <taxon>Pecora</taxon>
        <taxon>Bovidae</taxon>
        <taxon>Bovinae</taxon>
        <taxon>Bos</taxon>
    </lineage>
</organism>
<protein>
    <recommendedName>
        <fullName>3-hydroxyisobutyrate dehydrogenase, mitochondrial</fullName>
        <shortName>HIBADH</shortName>
        <ecNumber>1.1.1.31</ecNumber>
    </recommendedName>
</protein>
<comment type="catalytic activity">
    <reaction>
        <text>3-hydroxy-2-methylpropanoate + NAD(+) = 2-methyl-3-oxopropanoate + NADH + H(+)</text>
        <dbReference type="Rhea" id="RHEA:17681"/>
        <dbReference type="ChEBI" id="CHEBI:11805"/>
        <dbReference type="ChEBI" id="CHEBI:15378"/>
        <dbReference type="ChEBI" id="CHEBI:57540"/>
        <dbReference type="ChEBI" id="CHEBI:57700"/>
        <dbReference type="ChEBI" id="CHEBI:57945"/>
        <dbReference type="EC" id="1.1.1.31"/>
    </reaction>
</comment>
<comment type="pathway">
    <text>Amino-acid degradation; L-valine degradation.</text>
</comment>
<comment type="subunit">
    <text evidence="1">Homodimer.</text>
</comment>
<comment type="subcellular location">
    <subcellularLocation>
        <location evidence="1">Mitochondrion</location>
    </subcellularLocation>
</comment>
<comment type="similarity">
    <text evidence="3">Belongs to the HIBADH-related family. 3-hydroxyisobutyrate dehydrogenase subfamily.</text>
</comment>
<feature type="transit peptide" description="Mitochondrion" evidence="1">
    <location>
        <begin position="1"/>
        <end position="36"/>
    </location>
</feature>
<feature type="chain" id="PRO_0000290342" description="3-hydroxyisobutyrate dehydrogenase, mitochondrial">
    <location>
        <begin position="37"/>
        <end position="336"/>
    </location>
</feature>
<feature type="active site" evidence="1">
    <location>
        <position position="209"/>
    </location>
</feature>
<feature type="binding site" evidence="1">
    <location>
        <begin position="40"/>
        <end position="69"/>
    </location>
    <ligand>
        <name>NAD(+)</name>
        <dbReference type="ChEBI" id="CHEBI:57540"/>
    </ligand>
</feature>
<feature type="binding site" evidence="1">
    <location>
        <begin position="103"/>
        <end position="104"/>
    </location>
    <ligand>
        <name>NAD(+)</name>
        <dbReference type="ChEBI" id="CHEBI:57540"/>
    </ligand>
</feature>
<feature type="binding site" evidence="1">
    <location>
        <position position="108"/>
    </location>
    <ligand>
        <name>NAD(+)</name>
        <dbReference type="ChEBI" id="CHEBI:57540"/>
    </ligand>
</feature>
<feature type="binding site" evidence="1">
    <location>
        <position position="134"/>
    </location>
    <ligand>
        <name>NAD(+)</name>
        <dbReference type="ChEBI" id="CHEBI:57540"/>
    </ligand>
</feature>
<feature type="binding site" evidence="1">
    <location>
        <position position="284"/>
    </location>
    <ligand>
        <name>NAD(+)</name>
        <dbReference type="ChEBI" id="CHEBI:57540"/>
    </ligand>
</feature>
<feature type="modified residue" description="N6-acetyllysine; alternate" evidence="2">
    <location>
        <position position="60"/>
    </location>
</feature>
<feature type="modified residue" description="N6-succinyllysine; alternate" evidence="2">
    <location>
        <position position="60"/>
    </location>
</feature>
<feature type="modified residue" description="N6-acetyllysine; alternate" evidence="2">
    <location>
        <position position="76"/>
    </location>
</feature>
<feature type="modified residue" description="N6-succinyllysine; alternate" evidence="2">
    <location>
        <position position="76"/>
    </location>
</feature>
<feature type="modified residue" description="N6-succinyllysine" evidence="2">
    <location>
        <position position="95"/>
    </location>
</feature>
<feature type="modified residue" description="N6-acetyllysine" evidence="2">
    <location>
        <position position="121"/>
    </location>
</feature>
<feature type="modified residue" description="N6-succinyllysine" evidence="2">
    <location>
        <position position="141"/>
    </location>
</feature>
<feature type="modified residue" description="N6-acetyllysine" evidence="2">
    <location>
        <position position="145"/>
    </location>
</feature>
<feature type="modified residue" description="N6-acetyllysine; alternate" evidence="2">
    <location>
        <position position="149"/>
    </location>
</feature>
<feature type="modified residue" description="N6-succinyllysine; alternate" evidence="2">
    <location>
        <position position="149"/>
    </location>
</feature>
<feature type="modified residue" description="N6-acetyllysine; alternate" evidence="2">
    <location>
        <position position="238"/>
    </location>
</feature>
<feature type="modified residue" description="N6-succinyllysine; alternate" evidence="2">
    <location>
        <position position="238"/>
    </location>
</feature>
<feature type="modified residue" description="N6-acetyllysine; alternate" evidence="2">
    <location>
        <position position="242"/>
    </location>
</feature>
<feature type="modified residue" description="N6-succinyllysine; alternate" evidence="2">
    <location>
        <position position="242"/>
    </location>
</feature>
<feature type="modified residue" description="N6-succinyllysine" evidence="2">
    <location>
        <position position="297"/>
    </location>
</feature>
<feature type="modified residue" description="N6-acetyllysine; alternate" evidence="2">
    <location>
        <position position="321"/>
    </location>
</feature>
<feature type="modified residue" description="N6-succinyllysine; alternate" evidence="2">
    <location>
        <position position="321"/>
    </location>
</feature>
<dbReference type="EC" id="1.1.1.31"/>
<dbReference type="EMBL" id="BC105543">
    <property type="protein sequence ID" value="AAI05544.1"/>
    <property type="molecule type" value="mRNA"/>
</dbReference>
<dbReference type="RefSeq" id="NP_001039571.1">
    <property type="nucleotide sequence ID" value="NM_001046106.1"/>
</dbReference>
<dbReference type="SMR" id="Q2HJD7"/>
<dbReference type="FunCoup" id="Q2HJD7">
    <property type="interactions" value="2108"/>
</dbReference>
<dbReference type="STRING" id="9913.ENSBTAP00000001374"/>
<dbReference type="PaxDb" id="9913-ENSBTAP00000001374"/>
<dbReference type="PeptideAtlas" id="Q2HJD7"/>
<dbReference type="Ensembl" id="ENSBTAT00000001374.6">
    <property type="protein sequence ID" value="ENSBTAP00000001374.5"/>
    <property type="gene ID" value="ENSBTAG00000001036.7"/>
</dbReference>
<dbReference type="GeneID" id="512002"/>
<dbReference type="KEGG" id="bta:512002"/>
<dbReference type="CTD" id="11112"/>
<dbReference type="VEuPathDB" id="HostDB:ENSBTAG00000001036"/>
<dbReference type="VGNC" id="VGNC:29844">
    <property type="gene designation" value="HIBADH"/>
</dbReference>
<dbReference type="eggNOG" id="KOG0409">
    <property type="taxonomic scope" value="Eukaryota"/>
</dbReference>
<dbReference type="GeneTree" id="ENSGT00940000155255"/>
<dbReference type="HOGENOM" id="CLU_035117_6_0_1"/>
<dbReference type="InParanoid" id="Q2HJD7"/>
<dbReference type="OMA" id="MGKKVWH"/>
<dbReference type="OrthoDB" id="435038at2759"/>
<dbReference type="TreeFam" id="TF314043"/>
<dbReference type="Reactome" id="R-BTA-70895">
    <property type="pathway name" value="Branched-chain amino acid catabolism"/>
</dbReference>
<dbReference type="UniPathway" id="UPA00362"/>
<dbReference type="Proteomes" id="UP000009136">
    <property type="component" value="Chromosome 4"/>
</dbReference>
<dbReference type="Bgee" id="ENSBTAG00000001036">
    <property type="expression patterns" value="Expressed in liver and 103 other cell types or tissues"/>
</dbReference>
<dbReference type="GO" id="GO:0005739">
    <property type="term" value="C:mitochondrion"/>
    <property type="evidence" value="ECO:0000318"/>
    <property type="project" value="GO_Central"/>
</dbReference>
<dbReference type="GO" id="GO:0008442">
    <property type="term" value="F:3-hydroxyisobutyrate dehydrogenase activity"/>
    <property type="evidence" value="ECO:0000314"/>
    <property type="project" value="FlyBase"/>
</dbReference>
<dbReference type="GO" id="GO:0051287">
    <property type="term" value="F:NAD binding"/>
    <property type="evidence" value="ECO:0007669"/>
    <property type="project" value="InterPro"/>
</dbReference>
<dbReference type="GO" id="GO:0050661">
    <property type="term" value="F:NADP binding"/>
    <property type="evidence" value="ECO:0007669"/>
    <property type="project" value="InterPro"/>
</dbReference>
<dbReference type="GO" id="GO:0006574">
    <property type="term" value="P:valine catabolic process"/>
    <property type="evidence" value="ECO:0000250"/>
    <property type="project" value="UniProtKB"/>
</dbReference>
<dbReference type="FunFam" id="1.10.1040.10:FF:000006">
    <property type="entry name" value="3-hydroxyisobutyrate dehydrogenase"/>
    <property type="match status" value="1"/>
</dbReference>
<dbReference type="FunFam" id="3.40.50.720:FF:000119">
    <property type="entry name" value="3-hydroxyisobutyrate dehydrogenase"/>
    <property type="match status" value="1"/>
</dbReference>
<dbReference type="Gene3D" id="1.10.1040.10">
    <property type="entry name" value="N-(1-d-carboxylethyl)-l-norvaline Dehydrogenase, domain 2"/>
    <property type="match status" value="1"/>
</dbReference>
<dbReference type="Gene3D" id="3.40.50.720">
    <property type="entry name" value="NAD(P)-binding Rossmann-like Domain"/>
    <property type="match status" value="1"/>
</dbReference>
<dbReference type="InterPro" id="IPR008927">
    <property type="entry name" value="6-PGluconate_DH-like_C_sf"/>
</dbReference>
<dbReference type="InterPro" id="IPR013328">
    <property type="entry name" value="6PGD_dom2"/>
</dbReference>
<dbReference type="InterPro" id="IPR006115">
    <property type="entry name" value="6PGDH_NADP-bd"/>
</dbReference>
<dbReference type="InterPro" id="IPR011548">
    <property type="entry name" value="HIBADH"/>
</dbReference>
<dbReference type="InterPro" id="IPR029154">
    <property type="entry name" value="HIBADH-like_NADP-bd"/>
</dbReference>
<dbReference type="InterPro" id="IPR015815">
    <property type="entry name" value="HIBADH-related"/>
</dbReference>
<dbReference type="InterPro" id="IPR036291">
    <property type="entry name" value="NAD(P)-bd_dom_sf"/>
</dbReference>
<dbReference type="NCBIfam" id="TIGR01692">
    <property type="entry name" value="HIBADH"/>
    <property type="match status" value="1"/>
</dbReference>
<dbReference type="PANTHER" id="PTHR22981:SF7">
    <property type="entry name" value="3-HYDROXYISOBUTYRATE DEHYDROGENASE, MITOCHONDRIAL"/>
    <property type="match status" value="1"/>
</dbReference>
<dbReference type="PANTHER" id="PTHR22981">
    <property type="entry name" value="3-HYDROXYISOBUTYRATE DEHYDROGENASE-RELATED"/>
    <property type="match status" value="1"/>
</dbReference>
<dbReference type="Pfam" id="PF14833">
    <property type="entry name" value="NAD_binding_11"/>
    <property type="match status" value="1"/>
</dbReference>
<dbReference type="Pfam" id="PF03446">
    <property type="entry name" value="NAD_binding_2"/>
    <property type="match status" value="1"/>
</dbReference>
<dbReference type="PIRSF" id="PIRSF000103">
    <property type="entry name" value="HIBADH"/>
    <property type="match status" value="1"/>
</dbReference>
<dbReference type="SUPFAM" id="SSF48179">
    <property type="entry name" value="6-phosphogluconate dehydrogenase C-terminal domain-like"/>
    <property type="match status" value="1"/>
</dbReference>
<dbReference type="SUPFAM" id="SSF51735">
    <property type="entry name" value="NAD(P)-binding Rossmann-fold domains"/>
    <property type="match status" value="1"/>
</dbReference>
<evidence type="ECO:0000250" key="1"/>
<evidence type="ECO:0000250" key="2">
    <source>
        <dbReference type="UniProtKB" id="Q99L13"/>
    </source>
</evidence>
<evidence type="ECO:0000305" key="3"/>
<keyword id="KW-0007">Acetylation</keyword>
<keyword id="KW-0101">Branched-chain amino acid catabolism</keyword>
<keyword id="KW-0496">Mitochondrion</keyword>
<keyword id="KW-0520">NAD</keyword>
<keyword id="KW-0560">Oxidoreductase</keyword>
<keyword id="KW-1185">Reference proteome</keyword>
<keyword id="KW-0809">Transit peptide</keyword>
<sequence length="336" mass="35410">MAASLRLRGAASGLRYWSRRQPPAVASLAAVCSRSMASKTPVGFIGVGNMGNPMAKNLMKHGYPLIIYDVFPDACKEFLDAGEQVVSSPADVAEKADRIITMLPTSINAIEAYSGANGILKKVKKGSLLIDSSTIDPMVSKELAKEVEKMGAVFMDAPVSGGVGAARSGNLTFMVGGVEEEFAAAQELLGCMGSNVVYCGAVGTGQAAKICNNLLLAISMIGTAEAMNLGIRLGLDPKLLAKILNMSSGRCWSSDTYNPVPGVMDGVPSANNYQGGFGTTLMAKDLGLAQDSATSTKSPILLGSQAHQIYRMMCAKGYSKKDFSSVFQFLREEETF</sequence>
<reference key="1">
    <citation type="submission" date="2005-09" db="EMBL/GenBank/DDBJ databases">
        <authorList>
            <consortium name="NIH - Mammalian Gene Collection (MGC) project"/>
        </authorList>
    </citation>
    <scope>NUCLEOTIDE SEQUENCE [LARGE SCALE MRNA]</scope>
    <source>
        <strain>Hereford</strain>
        <tissue>Ascending colon</tissue>
    </source>
</reference>